<comment type="function">
    <text evidence="1">Binds to 23S rRNA.</text>
</comment>
<comment type="subunit">
    <text evidence="1">Part of the 50S ribosomal subunit.</text>
</comment>
<comment type="subcellular location">
    <subcellularLocation>
        <location>Plastid</location>
        <location>Chloroplast</location>
    </subcellularLocation>
</comment>
<comment type="similarity">
    <text evidence="1">Belongs to the universal ribosomal protein uL14 family.</text>
</comment>
<geneLocation type="chloroplast"/>
<accession>Q332U0</accession>
<keyword id="KW-0150">Chloroplast</keyword>
<keyword id="KW-0934">Plastid</keyword>
<keyword id="KW-0687">Ribonucleoprotein</keyword>
<keyword id="KW-0689">Ribosomal protein</keyword>
<keyword id="KW-0694">RNA-binding</keyword>
<keyword id="KW-0699">rRNA-binding</keyword>
<gene>
    <name evidence="1" type="primary">rpl14</name>
</gene>
<name>RK14_LACSA</name>
<reference key="1">
    <citation type="journal article" date="2006" name="Transgenic Res.">
        <title>Efficient and stable transformation of Lactuca sativa L. cv. Cisco (lettuce) plastids.</title>
        <authorList>
            <person name="Kanamoto H."/>
            <person name="Yamashita A."/>
            <person name="Asao H."/>
            <person name="Okumura S."/>
            <person name="Takase H."/>
            <person name="Hattori M."/>
            <person name="Yokota A."/>
            <person name="Tomizawa K."/>
        </authorList>
    </citation>
    <scope>NUCLEOTIDE SEQUENCE [LARGE SCALE GENOMIC DNA]</scope>
    <source>
        <strain>cv. Cisco</strain>
    </source>
</reference>
<reference key="2">
    <citation type="submission" date="2006-01" db="EMBL/GenBank/DDBJ databases">
        <title>A comparison of the first two published chloroplast genomes in Asteraceae: Lactuca and Helianthus.</title>
        <authorList>
            <person name="Timme R.E."/>
            <person name="Kuehl J.V."/>
            <person name="Boore J.L."/>
            <person name="Jansen R.K."/>
        </authorList>
    </citation>
    <scope>NUCLEOTIDE SEQUENCE [LARGE SCALE GENOMIC DNA]</scope>
    <source>
        <strain>cv. Salinas</strain>
    </source>
</reference>
<dbReference type="EMBL" id="AP007232">
    <property type="protein sequence ID" value="BAE47632.1"/>
    <property type="molecule type" value="Genomic_DNA"/>
</dbReference>
<dbReference type="EMBL" id="DQ383816">
    <property type="protein sequence ID" value="ABD47269.1"/>
    <property type="molecule type" value="Genomic_DNA"/>
</dbReference>
<dbReference type="RefSeq" id="YP_398365.1">
    <property type="nucleotide sequence ID" value="NC_007578.1"/>
</dbReference>
<dbReference type="SMR" id="Q332U0"/>
<dbReference type="EnsemblPlants" id="rna-gnl|WGS:NBSK|LSAT_2X92060_mrna">
    <property type="protein sequence ID" value="cds-PLY77781.1"/>
    <property type="gene ID" value="gene-LSAT_2X92060"/>
</dbReference>
<dbReference type="EnsemblPlants" id="rna-gnl|WGS:NBSK|LSAT_5X50441_mrna">
    <property type="protein sequence ID" value="cds-PLY89347.1"/>
    <property type="gene ID" value="gene-LSAT_5X50441"/>
</dbReference>
<dbReference type="EnsemblPlants" id="rna-gnl|WGS:NBSK|LSAT_5X61480_mrna">
    <property type="protein sequence ID" value="cds-PLY88652.1"/>
    <property type="gene ID" value="gene-LSAT_5X61480"/>
</dbReference>
<dbReference type="EnsemblPlants" id="rna-gnl|WGS:NBSK|LSAT_6X69081_mrna">
    <property type="protein sequence ID" value="cds-PLY78159.1"/>
    <property type="gene ID" value="gene-LSAT_6X69081"/>
</dbReference>
<dbReference type="GeneID" id="3772811"/>
<dbReference type="Gramene" id="rna-gnl|WGS:NBSK|LSAT_2X92060_mrna">
    <property type="protein sequence ID" value="cds-PLY77781.1"/>
    <property type="gene ID" value="gene-LSAT_2X92060"/>
</dbReference>
<dbReference type="Gramene" id="rna-gnl|WGS:NBSK|LSAT_5X50441_mrna">
    <property type="protein sequence ID" value="cds-PLY89347.1"/>
    <property type="gene ID" value="gene-LSAT_5X50441"/>
</dbReference>
<dbReference type="Gramene" id="rna-gnl|WGS:NBSK|LSAT_5X61480_mrna">
    <property type="protein sequence ID" value="cds-PLY88652.1"/>
    <property type="gene ID" value="gene-LSAT_5X61480"/>
</dbReference>
<dbReference type="Gramene" id="rna-gnl|WGS:NBSK|LSAT_6X69081_mrna">
    <property type="protein sequence ID" value="cds-PLY78159.1"/>
    <property type="gene ID" value="gene-LSAT_6X69081"/>
</dbReference>
<dbReference type="KEGG" id="lsv:3772811"/>
<dbReference type="OrthoDB" id="274765at2759"/>
<dbReference type="GO" id="GO:0009507">
    <property type="term" value="C:chloroplast"/>
    <property type="evidence" value="ECO:0007669"/>
    <property type="project" value="UniProtKB-SubCell"/>
</dbReference>
<dbReference type="GO" id="GO:0015934">
    <property type="term" value="C:large ribosomal subunit"/>
    <property type="evidence" value="ECO:0007669"/>
    <property type="project" value="InterPro"/>
</dbReference>
<dbReference type="GO" id="GO:0019843">
    <property type="term" value="F:rRNA binding"/>
    <property type="evidence" value="ECO:0007669"/>
    <property type="project" value="UniProtKB-UniRule"/>
</dbReference>
<dbReference type="GO" id="GO:0003735">
    <property type="term" value="F:structural constituent of ribosome"/>
    <property type="evidence" value="ECO:0007669"/>
    <property type="project" value="InterPro"/>
</dbReference>
<dbReference type="GO" id="GO:0006412">
    <property type="term" value="P:translation"/>
    <property type="evidence" value="ECO:0007669"/>
    <property type="project" value="UniProtKB-UniRule"/>
</dbReference>
<dbReference type="CDD" id="cd00337">
    <property type="entry name" value="Ribosomal_uL14"/>
    <property type="match status" value="1"/>
</dbReference>
<dbReference type="FunFam" id="2.40.150.20:FF:000002">
    <property type="entry name" value="50S ribosomal protein L14, chloroplastic"/>
    <property type="match status" value="1"/>
</dbReference>
<dbReference type="Gene3D" id="2.40.150.20">
    <property type="entry name" value="Ribosomal protein L14"/>
    <property type="match status" value="1"/>
</dbReference>
<dbReference type="HAMAP" id="MF_01367">
    <property type="entry name" value="Ribosomal_uL14"/>
    <property type="match status" value="1"/>
</dbReference>
<dbReference type="InterPro" id="IPR000218">
    <property type="entry name" value="Ribosomal_uL14"/>
</dbReference>
<dbReference type="InterPro" id="IPR005745">
    <property type="entry name" value="Ribosomal_uL14_bac-type"/>
</dbReference>
<dbReference type="InterPro" id="IPR019972">
    <property type="entry name" value="Ribosomal_uL14_CS"/>
</dbReference>
<dbReference type="InterPro" id="IPR036853">
    <property type="entry name" value="Ribosomal_uL14_sf"/>
</dbReference>
<dbReference type="NCBIfam" id="TIGR01067">
    <property type="entry name" value="rplN_bact"/>
    <property type="match status" value="1"/>
</dbReference>
<dbReference type="PANTHER" id="PTHR11761">
    <property type="entry name" value="50S/60S RIBOSOMAL PROTEIN L14/L23"/>
    <property type="match status" value="1"/>
</dbReference>
<dbReference type="PANTHER" id="PTHR11761:SF3">
    <property type="entry name" value="LARGE RIBOSOMAL SUBUNIT PROTEIN UL14M"/>
    <property type="match status" value="1"/>
</dbReference>
<dbReference type="Pfam" id="PF00238">
    <property type="entry name" value="Ribosomal_L14"/>
    <property type="match status" value="1"/>
</dbReference>
<dbReference type="SMART" id="SM01374">
    <property type="entry name" value="Ribosomal_L14"/>
    <property type="match status" value="1"/>
</dbReference>
<dbReference type="SUPFAM" id="SSF50193">
    <property type="entry name" value="Ribosomal protein L14"/>
    <property type="match status" value="1"/>
</dbReference>
<dbReference type="PROSITE" id="PS00049">
    <property type="entry name" value="RIBOSOMAL_L14"/>
    <property type="match status" value="1"/>
</dbReference>
<proteinExistence type="inferred from homology"/>
<evidence type="ECO:0000255" key="1">
    <source>
        <dbReference type="HAMAP-Rule" id="MF_01367"/>
    </source>
</evidence>
<evidence type="ECO:0000305" key="2"/>
<protein>
    <recommendedName>
        <fullName evidence="1">Large ribosomal subunit protein uL14c</fullName>
    </recommendedName>
    <alternativeName>
        <fullName evidence="2">50S ribosomal protein L14, chloroplastic</fullName>
    </alternativeName>
</protein>
<feature type="chain" id="PRO_0000276350" description="Large ribosomal subunit protein uL14c">
    <location>
        <begin position="1"/>
        <end position="122"/>
    </location>
</feature>
<organism>
    <name type="scientific">Lactuca sativa</name>
    <name type="common">Garden lettuce</name>
    <dbReference type="NCBI Taxonomy" id="4236"/>
    <lineage>
        <taxon>Eukaryota</taxon>
        <taxon>Viridiplantae</taxon>
        <taxon>Streptophyta</taxon>
        <taxon>Embryophyta</taxon>
        <taxon>Tracheophyta</taxon>
        <taxon>Spermatophyta</taxon>
        <taxon>Magnoliopsida</taxon>
        <taxon>eudicotyledons</taxon>
        <taxon>Gunneridae</taxon>
        <taxon>Pentapetalae</taxon>
        <taxon>asterids</taxon>
        <taxon>campanulids</taxon>
        <taxon>Asterales</taxon>
        <taxon>Asteraceae</taxon>
        <taxon>Cichorioideae</taxon>
        <taxon>Cichorieae</taxon>
        <taxon>Lactucinae</taxon>
        <taxon>Lactuca</taxon>
    </lineage>
</organism>
<sequence length="122" mass="13583">MIQPQTHLNVADNSGARELMCIRIIGASNRRYAHIGDVIVAVIKDAVPNMPLERSEVVRAVIVRTCKELKRDNGMIIRYDDNAAVVIDQEGNPKGTRVFGAIARELRQFNFTKIVSLAPEVL</sequence>